<reference key="1">
    <citation type="journal article" date="2006" name="J. Bacteriol.">
        <title>Comparative genomic evidence for a close relationship between the dimorphic prosthecate bacteria Hyphomonas neptunium and Caulobacter crescentus.</title>
        <authorList>
            <person name="Badger J.H."/>
            <person name="Hoover T.R."/>
            <person name="Brun Y.V."/>
            <person name="Weiner R.M."/>
            <person name="Laub M.T."/>
            <person name="Alexandre G."/>
            <person name="Mrazek J."/>
            <person name="Ren Q."/>
            <person name="Paulsen I.T."/>
            <person name="Nelson K.E."/>
            <person name="Khouri H.M."/>
            <person name="Radune D."/>
            <person name="Sosa J."/>
            <person name="Dodson R.J."/>
            <person name="Sullivan S.A."/>
            <person name="Rosovitz M.J."/>
            <person name="Madupu R."/>
            <person name="Brinkac L.M."/>
            <person name="Durkin A.S."/>
            <person name="Daugherty S.C."/>
            <person name="Kothari S.P."/>
            <person name="Giglio M.G."/>
            <person name="Zhou L."/>
            <person name="Haft D.H."/>
            <person name="Selengut J.D."/>
            <person name="Davidsen T.M."/>
            <person name="Yang Q."/>
            <person name="Zafar N."/>
            <person name="Ward N.L."/>
        </authorList>
    </citation>
    <scope>NUCLEOTIDE SEQUENCE [LARGE SCALE GENOMIC DNA]</scope>
    <source>
        <strain>ATCC 15444</strain>
    </source>
</reference>
<dbReference type="EC" id="2.1.3.2" evidence="1"/>
<dbReference type="EMBL" id="CP000158">
    <property type="protein sequence ID" value="ABI78482.1"/>
    <property type="molecule type" value="Genomic_DNA"/>
</dbReference>
<dbReference type="RefSeq" id="WP_011647295.1">
    <property type="nucleotide sequence ID" value="NC_008358.1"/>
</dbReference>
<dbReference type="SMR" id="Q0BZU6"/>
<dbReference type="STRING" id="228405.HNE_2302"/>
<dbReference type="KEGG" id="hne:HNE_2302"/>
<dbReference type="eggNOG" id="COG0540">
    <property type="taxonomic scope" value="Bacteria"/>
</dbReference>
<dbReference type="HOGENOM" id="CLU_043846_2_0_5"/>
<dbReference type="UniPathway" id="UPA00070">
    <property type="reaction ID" value="UER00116"/>
</dbReference>
<dbReference type="Proteomes" id="UP000001959">
    <property type="component" value="Chromosome"/>
</dbReference>
<dbReference type="GO" id="GO:0005829">
    <property type="term" value="C:cytosol"/>
    <property type="evidence" value="ECO:0007669"/>
    <property type="project" value="TreeGrafter"/>
</dbReference>
<dbReference type="GO" id="GO:0016597">
    <property type="term" value="F:amino acid binding"/>
    <property type="evidence" value="ECO:0007669"/>
    <property type="project" value="InterPro"/>
</dbReference>
<dbReference type="GO" id="GO:0004070">
    <property type="term" value="F:aspartate carbamoyltransferase activity"/>
    <property type="evidence" value="ECO:0007669"/>
    <property type="project" value="UniProtKB-UniRule"/>
</dbReference>
<dbReference type="GO" id="GO:0006207">
    <property type="term" value="P:'de novo' pyrimidine nucleobase biosynthetic process"/>
    <property type="evidence" value="ECO:0007669"/>
    <property type="project" value="InterPro"/>
</dbReference>
<dbReference type="GO" id="GO:0044205">
    <property type="term" value="P:'de novo' UMP biosynthetic process"/>
    <property type="evidence" value="ECO:0007669"/>
    <property type="project" value="UniProtKB-UniRule"/>
</dbReference>
<dbReference type="GO" id="GO:0006520">
    <property type="term" value="P:amino acid metabolic process"/>
    <property type="evidence" value="ECO:0007669"/>
    <property type="project" value="InterPro"/>
</dbReference>
<dbReference type="FunFam" id="3.40.50.1370:FF:000007">
    <property type="entry name" value="Aspartate carbamoyltransferase"/>
    <property type="match status" value="1"/>
</dbReference>
<dbReference type="Gene3D" id="3.40.50.1370">
    <property type="entry name" value="Aspartate/ornithine carbamoyltransferase"/>
    <property type="match status" value="2"/>
</dbReference>
<dbReference type="HAMAP" id="MF_00001">
    <property type="entry name" value="Asp_carb_tr"/>
    <property type="match status" value="1"/>
</dbReference>
<dbReference type="InterPro" id="IPR006132">
    <property type="entry name" value="Asp/Orn_carbamoyltranf_P-bd"/>
</dbReference>
<dbReference type="InterPro" id="IPR006130">
    <property type="entry name" value="Asp/Orn_carbamoylTrfase"/>
</dbReference>
<dbReference type="InterPro" id="IPR036901">
    <property type="entry name" value="Asp/Orn_carbamoylTrfase_sf"/>
</dbReference>
<dbReference type="InterPro" id="IPR002082">
    <property type="entry name" value="Asp_carbamoyltransf"/>
</dbReference>
<dbReference type="InterPro" id="IPR006131">
    <property type="entry name" value="Asp_carbamoyltransf_Asp/Orn-bd"/>
</dbReference>
<dbReference type="NCBIfam" id="TIGR00670">
    <property type="entry name" value="asp_carb_tr"/>
    <property type="match status" value="1"/>
</dbReference>
<dbReference type="NCBIfam" id="NF002032">
    <property type="entry name" value="PRK00856.1"/>
    <property type="match status" value="1"/>
</dbReference>
<dbReference type="PANTHER" id="PTHR45753:SF6">
    <property type="entry name" value="ASPARTATE CARBAMOYLTRANSFERASE"/>
    <property type="match status" value="1"/>
</dbReference>
<dbReference type="PANTHER" id="PTHR45753">
    <property type="entry name" value="ORNITHINE CARBAMOYLTRANSFERASE, MITOCHONDRIAL"/>
    <property type="match status" value="1"/>
</dbReference>
<dbReference type="Pfam" id="PF00185">
    <property type="entry name" value="OTCace"/>
    <property type="match status" value="1"/>
</dbReference>
<dbReference type="Pfam" id="PF02729">
    <property type="entry name" value="OTCace_N"/>
    <property type="match status" value="1"/>
</dbReference>
<dbReference type="PRINTS" id="PR00100">
    <property type="entry name" value="AOTCASE"/>
</dbReference>
<dbReference type="PRINTS" id="PR00101">
    <property type="entry name" value="ATCASE"/>
</dbReference>
<dbReference type="SUPFAM" id="SSF53671">
    <property type="entry name" value="Aspartate/ornithine carbamoyltransferase"/>
    <property type="match status" value="1"/>
</dbReference>
<dbReference type="PROSITE" id="PS00097">
    <property type="entry name" value="CARBAMOYLTRANSFERASE"/>
    <property type="match status" value="1"/>
</dbReference>
<gene>
    <name evidence="1" type="primary">pyrB</name>
    <name type="ordered locus">HNE_2302</name>
</gene>
<feature type="chain" id="PRO_0000321108" description="Aspartate carbamoyltransferase catalytic subunit">
    <location>
        <begin position="1"/>
        <end position="315"/>
    </location>
</feature>
<feature type="binding site" evidence="1">
    <location>
        <position position="65"/>
    </location>
    <ligand>
        <name>carbamoyl phosphate</name>
        <dbReference type="ChEBI" id="CHEBI:58228"/>
    </ligand>
</feature>
<feature type="binding site" evidence="1">
    <location>
        <position position="66"/>
    </location>
    <ligand>
        <name>carbamoyl phosphate</name>
        <dbReference type="ChEBI" id="CHEBI:58228"/>
    </ligand>
</feature>
<feature type="binding site" evidence="1">
    <location>
        <position position="93"/>
    </location>
    <ligand>
        <name>L-aspartate</name>
        <dbReference type="ChEBI" id="CHEBI:29991"/>
    </ligand>
</feature>
<feature type="binding site" evidence="1">
    <location>
        <position position="115"/>
    </location>
    <ligand>
        <name>carbamoyl phosphate</name>
        <dbReference type="ChEBI" id="CHEBI:58228"/>
    </ligand>
</feature>
<feature type="binding site" evidence="1">
    <location>
        <position position="143"/>
    </location>
    <ligand>
        <name>carbamoyl phosphate</name>
        <dbReference type="ChEBI" id="CHEBI:58228"/>
    </ligand>
</feature>
<feature type="binding site" evidence="1">
    <location>
        <position position="146"/>
    </location>
    <ligand>
        <name>carbamoyl phosphate</name>
        <dbReference type="ChEBI" id="CHEBI:58228"/>
    </ligand>
</feature>
<feature type="binding site" evidence="1">
    <location>
        <position position="176"/>
    </location>
    <ligand>
        <name>L-aspartate</name>
        <dbReference type="ChEBI" id="CHEBI:29991"/>
    </ligand>
</feature>
<feature type="binding site" evidence="1">
    <location>
        <position position="231"/>
    </location>
    <ligand>
        <name>L-aspartate</name>
        <dbReference type="ChEBI" id="CHEBI:29991"/>
    </ligand>
</feature>
<feature type="binding site" evidence="1">
    <location>
        <position position="272"/>
    </location>
    <ligand>
        <name>carbamoyl phosphate</name>
        <dbReference type="ChEBI" id="CHEBI:58228"/>
    </ligand>
</feature>
<feature type="binding site" evidence="1">
    <location>
        <position position="273"/>
    </location>
    <ligand>
        <name>carbamoyl phosphate</name>
        <dbReference type="ChEBI" id="CHEBI:58228"/>
    </ligand>
</feature>
<accession>Q0BZU6</accession>
<organism>
    <name type="scientific">Hyphomonas neptunium (strain ATCC 15444)</name>
    <dbReference type="NCBI Taxonomy" id="228405"/>
    <lineage>
        <taxon>Bacteria</taxon>
        <taxon>Pseudomonadati</taxon>
        <taxon>Pseudomonadota</taxon>
        <taxon>Alphaproteobacteria</taxon>
        <taxon>Hyphomonadales</taxon>
        <taxon>Hyphomonadaceae</taxon>
        <taxon>Hyphomonas</taxon>
    </lineage>
</organism>
<name>PYRB_HYPNA</name>
<sequence>MAPPRPDYTFTHEHLLGIEGLHPLDIGHILDLADSYAEKTRAGVRPDPVLTGKTVVNLFFETSTRTMSSFEIAARRLGAHVISMPIANSSVKKGETLIDTAMTLNAMKPDALVIRHSASGGAKLLSRKVDCAVINAGDGTHEHPTQALLDLLTIRRVKNRIEGLKVVICGDIAHSRVARSTTMALHLMGARVHLCGPKTLIPPGTETWGAESAGTDFDKVLKGADVVMMLRLQLERMNGSFLPSRREYFRYFGLTAERLALAKPNATVMHPGPMNRGVEIESTIADGPSSVITQQVEMGVAVREAVLHLLAGGKS</sequence>
<proteinExistence type="inferred from homology"/>
<keyword id="KW-0665">Pyrimidine biosynthesis</keyword>
<keyword id="KW-1185">Reference proteome</keyword>
<keyword id="KW-0808">Transferase</keyword>
<comment type="function">
    <text evidence="1">Catalyzes the condensation of carbamoyl phosphate and aspartate to form carbamoyl aspartate and inorganic phosphate, the committed step in the de novo pyrimidine nucleotide biosynthesis pathway.</text>
</comment>
<comment type="catalytic activity">
    <reaction evidence="1">
        <text>carbamoyl phosphate + L-aspartate = N-carbamoyl-L-aspartate + phosphate + H(+)</text>
        <dbReference type="Rhea" id="RHEA:20013"/>
        <dbReference type="ChEBI" id="CHEBI:15378"/>
        <dbReference type="ChEBI" id="CHEBI:29991"/>
        <dbReference type="ChEBI" id="CHEBI:32814"/>
        <dbReference type="ChEBI" id="CHEBI:43474"/>
        <dbReference type="ChEBI" id="CHEBI:58228"/>
        <dbReference type="EC" id="2.1.3.2"/>
    </reaction>
</comment>
<comment type="pathway">
    <text evidence="1">Pyrimidine metabolism; UMP biosynthesis via de novo pathway; (S)-dihydroorotate from bicarbonate: step 2/3.</text>
</comment>
<comment type="subunit">
    <text evidence="1">Heterododecamer (2C3:3R2) of six catalytic PyrB chains organized as two trimers (C3), and six regulatory PyrI chains organized as three dimers (R2).</text>
</comment>
<comment type="similarity">
    <text evidence="1">Belongs to the aspartate/ornithine carbamoyltransferase superfamily. ATCase family.</text>
</comment>
<protein>
    <recommendedName>
        <fullName evidence="1">Aspartate carbamoyltransferase catalytic subunit</fullName>
        <ecNumber evidence="1">2.1.3.2</ecNumber>
    </recommendedName>
    <alternativeName>
        <fullName evidence="1">Aspartate transcarbamylase</fullName>
        <shortName evidence="1">ATCase</shortName>
    </alternativeName>
</protein>
<evidence type="ECO:0000255" key="1">
    <source>
        <dbReference type="HAMAP-Rule" id="MF_00001"/>
    </source>
</evidence>